<organism>
    <name type="scientific">Staphylococcus carnosus (strain TM300)</name>
    <dbReference type="NCBI Taxonomy" id="396513"/>
    <lineage>
        <taxon>Bacteria</taxon>
        <taxon>Bacillati</taxon>
        <taxon>Bacillota</taxon>
        <taxon>Bacilli</taxon>
        <taxon>Bacillales</taxon>
        <taxon>Staphylococcaceae</taxon>
        <taxon>Staphylococcus</taxon>
    </lineage>
</organism>
<reference key="1">
    <citation type="journal article" date="2009" name="Appl. Environ. Microbiol.">
        <title>Genome analysis of the meat starter culture bacterium Staphylococcus carnosus TM300.</title>
        <authorList>
            <person name="Rosenstein R."/>
            <person name="Nerz C."/>
            <person name="Biswas L."/>
            <person name="Resch A."/>
            <person name="Raddatz G."/>
            <person name="Schuster S.C."/>
            <person name="Goetz F."/>
        </authorList>
    </citation>
    <scope>NUCLEOTIDE SEQUENCE [LARGE SCALE GENOMIC DNA]</scope>
    <source>
        <strain>TM300</strain>
    </source>
</reference>
<protein>
    <recommendedName>
        <fullName evidence="1">6,7-dimethyl-8-ribityllumazine synthase</fullName>
        <shortName evidence="1">DMRL synthase</shortName>
        <shortName evidence="1">LS</shortName>
        <shortName evidence="1">Lumazine synthase</shortName>
        <ecNumber evidence="1">2.5.1.78</ecNumber>
    </recommendedName>
</protein>
<dbReference type="EC" id="2.5.1.78" evidence="1"/>
<dbReference type="EMBL" id="AM295250">
    <property type="protein sequence ID" value="CAL28276.1"/>
    <property type="molecule type" value="Genomic_DNA"/>
</dbReference>
<dbReference type="RefSeq" id="WP_015900616.1">
    <property type="nucleotide sequence ID" value="NC_012121.1"/>
</dbReference>
<dbReference type="SMR" id="B9DN29"/>
<dbReference type="GeneID" id="93793789"/>
<dbReference type="KEGG" id="sca:SCA_1372"/>
<dbReference type="eggNOG" id="COG0054">
    <property type="taxonomic scope" value="Bacteria"/>
</dbReference>
<dbReference type="HOGENOM" id="CLU_089358_1_1_9"/>
<dbReference type="OrthoDB" id="9809709at2"/>
<dbReference type="BioCyc" id="SCAR396513:SCA_RS06810-MONOMER"/>
<dbReference type="UniPathway" id="UPA00275">
    <property type="reaction ID" value="UER00404"/>
</dbReference>
<dbReference type="Proteomes" id="UP000000444">
    <property type="component" value="Chromosome"/>
</dbReference>
<dbReference type="GO" id="GO:0005829">
    <property type="term" value="C:cytosol"/>
    <property type="evidence" value="ECO:0007669"/>
    <property type="project" value="TreeGrafter"/>
</dbReference>
<dbReference type="GO" id="GO:0009349">
    <property type="term" value="C:riboflavin synthase complex"/>
    <property type="evidence" value="ECO:0007669"/>
    <property type="project" value="InterPro"/>
</dbReference>
<dbReference type="GO" id="GO:0000906">
    <property type="term" value="F:6,7-dimethyl-8-ribityllumazine synthase activity"/>
    <property type="evidence" value="ECO:0007669"/>
    <property type="project" value="UniProtKB-UniRule"/>
</dbReference>
<dbReference type="GO" id="GO:0009231">
    <property type="term" value="P:riboflavin biosynthetic process"/>
    <property type="evidence" value="ECO:0007669"/>
    <property type="project" value="UniProtKB-UniRule"/>
</dbReference>
<dbReference type="CDD" id="cd09209">
    <property type="entry name" value="Lumazine_synthase-I"/>
    <property type="match status" value="1"/>
</dbReference>
<dbReference type="FunFam" id="3.40.50.960:FF:000001">
    <property type="entry name" value="6,7-dimethyl-8-ribityllumazine synthase"/>
    <property type="match status" value="1"/>
</dbReference>
<dbReference type="Gene3D" id="3.40.50.960">
    <property type="entry name" value="Lumazine/riboflavin synthase"/>
    <property type="match status" value="1"/>
</dbReference>
<dbReference type="HAMAP" id="MF_00178">
    <property type="entry name" value="Lumazine_synth"/>
    <property type="match status" value="1"/>
</dbReference>
<dbReference type="InterPro" id="IPR034964">
    <property type="entry name" value="LS"/>
</dbReference>
<dbReference type="InterPro" id="IPR002180">
    <property type="entry name" value="LS/RS"/>
</dbReference>
<dbReference type="InterPro" id="IPR036467">
    <property type="entry name" value="LS/RS_sf"/>
</dbReference>
<dbReference type="NCBIfam" id="TIGR00114">
    <property type="entry name" value="lumazine-synth"/>
    <property type="match status" value="1"/>
</dbReference>
<dbReference type="NCBIfam" id="NF000812">
    <property type="entry name" value="PRK00061.1-4"/>
    <property type="match status" value="1"/>
</dbReference>
<dbReference type="PANTHER" id="PTHR21058:SF0">
    <property type="entry name" value="6,7-DIMETHYL-8-RIBITYLLUMAZINE SYNTHASE"/>
    <property type="match status" value="1"/>
</dbReference>
<dbReference type="PANTHER" id="PTHR21058">
    <property type="entry name" value="6,7-DIMETHYL-8-RIBITYLLUMAZINE SYNTHASE DMRL SYNTHASE LUMAZINE SYNTHASE"/>
    <property type="match status" value="1"/>
</dbReference>
<dbReference type="Pfam" id="PF00885">
    <property type="entry name" value="DMRL_synthase"/>
    <property type="match status" value="1"/>
</dbReference>
<dbReference type="SUPFAM" id="SSF52121">
    <property type="entry name" value="Lumazine synthase"/>
    <property type="match status" value="1"/>
</dbReference>
<name>RISB_STACT</name>
<evidence type="ECO:0000255" key="1">
    <source>
        <dbReference type="HAMAP-Rule" id="MF_00178"/>
    </source>
</evidence>
<sequence length="152" mass="16143">MNFEGKLLGQDLKIGIVVSRFNDFITGRLLDGAKDVLVRHEVESEKIDVAFVPGAFEIPLAAKKLAETGKYDAVITLGCVIRGATSHYDYVCNEVAKGVSKVSDTTGLPVIFGVLTTETIEQAVERAGTKAGNKGAEAAMAAIEMANLLKSI</sequence>
<proteinExistence type="inferred from homology"/>
<comment type="function">
    <text evidence="1">Catalyzes the formation of 6,7-dimethyl-8-ribityllumazine by condensation of 5-amino-6-(D-ribitylamino)uracil with 3,4-dihydroxy-2-butanone 4-phosphate. This is the penultimate step in the biosynthesis of riboflavin.</text>
</comment>
<comment type="catalytic activity">
    <reaction evidence="1">
        <text>(2S)-2-hydroxy-3-oxobutyl phosphate + 5-amino-6-(D-ribitylamino)uracil = 6,7-dimethyl-8-(1-D-ribityl)lumazine + phosphate + 2 H2O + H(+)</text>
        <dbReference type="Rhea" id="RHEA:26152"/>
        <dbReference type="ChEBI" id="CHEBI:15377"/>
        <dbReference type="ChEBI" id="CHEBI:15378"/>
        <dbReference type="ChEBI" id="CHEBI:15934"/>
        <dbReference type="ChEBI" id="CHEBI:43474"/>
        <dbReference type="ChEBI" id="CHEBI:58201"/>
        <dbReference type="ChEBI" id="CHEBI:58830"/>
        <dbReference type="EC" id="2.5.1.78"/>
    </reaction>
</comment>
<comment type="pathway">
    <text evidence="1">Cofactor biosynthesis; riboflavin biosynthesis; riboflavin from 2-hydroxy-3-oxobutyl phosphate and 5-amino-6-(D-ribitylamino)uracil: step 1/2.</text>
</comment>
<comment type="subunit">
    <text evidence="1">Forms an icosahedral capsid composed of 60 subunits, arranged as a dodecamer of pentamers.</text>
</comment>
<comment type="similarity">
    <text evidence="1">Belongs to the DMRL synthase family.</text>
</comment>
<gene>
    <name evidence="1" type="primary">ribH</name>
    <name type="ordered locus">Sca_1372</name>
</gene>
<feature type="chain" id="PRO_1000195510" description="6,7-dimethyl-8-ribityllumazine synthase">
    <location>
        <begin position="1"/>
        <end position="152"/>
    </location>
</feature>
<feature type="active site" description="Proton donor" evidence="1">
    <location>
        <position position="87"/>
    </location>
</feature>
<feature type="binding site" evidence="1">
    <location>
        <position position="21"/>
    </location>
    <ligand>
        <name>5-amino-6-(D-ribitylamino)uracil</name>
        <dbReference type="ChEBI" id="CHEBI:15934"/>
    </ligand>
</feature>
<feature type="binding site" evidence="1">
    <location>
        <begin position="55"/>
        <end position="57"/>
    </location>
    <ligand>
        <name>5-amino-6-(D-ribitylamino)uracil</name>
        <dbReference type="ChEBI" id="CHEBI:15934"/>
    </ligand>
</feature>
<feature type="binding site" evidence="1">
    <location>
        <begin position="79"/>
        <end position="81"/>
    </location>
    <ligand>
        <name>5-amino-6-(D-ribitylamino)uracil</name>
        <dbReference type="ChEBI" id="CHEBI:15934"/>
    </ligand>
</feature>
<feature type="binding site" evidence="1">
    <location>
        <begin position="84"/>
        <end position="85"/>
    </location>
    <ligand>
        <name>(2S)-2-hydroxy-3-oxobutyl phosphate</name>
        <dbReference type="ChEBI" id="CHEBI:58830"/>
    </ligand>
</feature>
<feature type="binding site" evidence="1">
    <location>
        <position position="112"/>
    </location>
    <ligand>
        <name>5-amino-6-(D-ribitylamino)uracil</name>
        <dbReference type="ChEBI" id="CHEBI:15934"/>
    </ligand>
</feature>
<feature type="binding site" evidence="1">
    <location>
        <position position="126"/>
    </location>
    <ligand>
        <name>(2S)-2-hydroxy-3-oxobutyl phosphate</name>
        <dbReference type="ChEBI" id="CHEBI:58830"/>
    </ligand>
</feature>
<accession>B9DN29</accession>
<keyword id="KW-1185">Reference proteome</keyword>
<keyword id="KW-0686">Riboflavin biosynthesis</keyword>
<keyword id="KW-0808">Transferase</keyword>